<name>ATPE_STRZJ</name>
<proteinExistence type="inferred from homology"/>
<evidence type="ECO:0000255" key="1">
    <source>
        <dbReference type="HAMAP-Rule" id="MF_00530"/>
    </source>
</evidence>
<feature type="chain" id="PRO_1000146352" description="ATP synthase epsilon chain">
    <location>
        <begin position="1"/>
        <end position="139"/>
    </location>
</feature>
<sequence>MAQLTVQIVTPDGLVYDHHASYVSVRTLDGEMGILPRHENMIAVLAVDEVKVKRIDDKDHVNWIAVNGGVIEIANDMITIVADSAERARDIDISRAERAKLRAERAIEEAQDKHLIDQERRAKIALQRAINRINVGNRL</sequence>
<organism>
    <name type="scientific">Streptococcus pneumoniae (strain JJA)</name>
    <dbReference type="NCBI Taxonomy" id="488222"/>
    <lineage>
        <taxon>Bacteria</taxon>
        <taxon>Bacillati</taxon>
        <taxon>Bacillota</taxon>
        <taxon>Bacilli</taxon>
        <taxon>Lactobacillales</taxon>
        <taxon>Streptococcaceae</taxon>
        <taxon>Streptococcus</taxon>
    </lineage>
</organism>
<gene>
    <name evidence="1" type="primary">atpC</name>
    <name type="ordered locus">SPJ_1409</name>
</gene>
<dbReference type="EMBL" id="CP000919">
    <property type="protein sequence ID" value="ACO19757.1"/>
    <property type="molecule type" value="Genomic_DNA"/>
</dbReference>
<dbReference type="RefSeq" id="WP_000068050.1">
    <property type="nucleotide sequence ID" value="NC_012466.1"/>
</dbReference>
<dbReference type="SMR" id="C1CF92"/>
<dbReference type="KEGG" id="sjj:SPJ_1409"/>
<dbReference type="HOGENOM" id="CLU_084338_1_0_9"/>
<dbReference type="Proteomes" id="UP000002206">
    <property type="component" value="Chromosome"/>
</dbReference>
<dbReference type="GO" id="GO:0005886">
    <property type="term" value="C:plasma membrane"/>
    <property type="evidence" value="ECO:0007669"/>
    <property type="project" value="UniProtKB-SubCell"/>
</dbReference>
<dbReference type="GO" id="GO:0045259">
    <property type="term" value="C:proton-transporting ATP synthase complex"/>
    <property type="evidence" value="ECO:0007669"/>
    <property type="project" value="UniProtKB-KW"/>
</dbReference>
<dbReference type="GO" id="GO:0005524">
    <property type="term" value="F:ATP binding"/>
    <property type="evidence" value="ECO:0007669"/>
    <property type="project" value="UniProtKB-UniRule"/>
</dbReference>
<dbReference type="GO" id="GO:0046933">
    <property type="term" value="F:proton-transporting ATP synthase activity, rotational mechanism"/>
    <property type="evidence" value="ECO:0007669"/>
    <property type="project" value="UniProtKB-UniRule"/>
</dbReference>
<dbReference type="CDD" id="cd12152">
    <property type="entry name" value="F1-ATPase_delta"/>
    <property type="match status" value="1"/>
</dbReference>
<dbReference type="FunFam" id="1.20.5.440:FF:000001">
    <property type="entry name" value="ATP synthase epsilon chain"/>
    <property type="match status" value="1"/>
</dbReference>
<dbReference type="Gene3D" id="1.20.5.440">
    <property type="entry name" value="ATP synthase delta/epsilon subunit, C-terminal domain"/>
    <property type="match status" value="1"/>
</dbReference>
<dbReference type="Gene3D" id="2.60.15.10">
    <property type="entry name" value="F0F1 ATP synthase delta/epsilon subunit, N-terminal"/>
    <property type="match status" value="1"/>
</dbReference>
<dbReference type="HAMAP" id="MF_00530">
    <property type="entry name" value="ATP_synth_epsil_bac"/>
    <property type="match status" value="1"/>
</dbReference>
<dbReference type="InterPro" id="IPR001469">
    <property type="entry name" value="ATP_synth_F1_dsu/esu"/>
</dbReference>
<dbReference type="InterPro" id="IPR020546">
    <property type="entry name" value="ATP_synth_F1_dsu/esu_N"/>
</dbReference>
<dbReference type="InterPro" id="IPR020547">
    <property type="entry name" value="ATP_synth_F1_esu_C"/>
</dbReference>
<dbReference type="InterPro" id="IPR036771">
    <property type="entry name" value="ATPsynth_dsu/esu_N"/>
</dbReference>
<dbReference type="NCBIfam" id="TIGR01216">
    <property type="entry name" value="ATP_synt_epsi"/>
    <property type="match status" value="1"/>
</dbReference>
<dbReference type="NCBIfam" id="NF001846">
    <property type="entry name" value="PRK00571.1-3"/>
    <property type="match status" value="1"/>
</dbReference>
<dbReference type="PANTHER" id="PTHR13822">
    <property type="entry name" value="ATP SYNTHASE DELTA/EPSILON CHAIN"/>
    <property type="match status" value="1"/>
</dbReference>
<dbReference type="PANTHER" id="PTHR13822:SF10">
    <property type="entry name" value="ATP SYNTHASE EPSILON CHAIN, CHLOROPLASTIC"/>
    <property type="match status" value="1"/>
</dbReference>
<dbReference type="Pfam" id="PF00401">
    <property type="entry name" value="ATP-synt_DE"/>
    <property type="match status" value="1"/>
</dbReference>
<dbReference type="Pfam" id="PF02823">
    <property type="entry name" value="ATP-synt_DE_N"/>
    <property type="match status" value="1"/>
</dbReference>
<dbReference type="SUPFAM" id="SSF51344">
    <property type="entry name" value="Epsilon subunit of F1F0-ATP synthase N-terminal domain"/>
    <property type="match status" value="1"/>
</dbReference>
<comment type="function">
    <text evidence="1">Produces ATP from ADP in the presence of a proton gradient across the membrane.</text>
</comment>
<comment type="subunit">
    <text evidence="1">F-type ATPases have 2 components, CF(1) - the catalytic core - and CF(0) - the membrane proton channel. CF(1) has five subunits: alpha(3), beta(3), gamma(1), delta(1), epsilon(1). CF(0) has three main subunits: a, b and c.</text>
</comment>
<comment type="subcellular location">
    <subcellularLocation>
        <location evidence="1">Cell membrane</location>
        <topology evidence="1">Peripheral membrane protein</topology>
    </subcellularLocation>
</comment>
<comment type="similarity">
    <text evidence="1">Belongs to the ATPase epsilon chain family.</text>
</comment>
<accession>C1CF92</accession>
<reference key="1">
    <citation type="journal article" date="2010" name="Genome Biol.">
        <title>Structure and dynamics of the pan-genome of Streptococcus pneumoniae and closely related species.</title>
        <authorList>
            <person name="Donati C."/>
            <person name="Hiller N.L."/>
            <person name="Tettelin H."/>
            <person name="Muzzi A."/>
            <person name="Croucher N.J."/>
            <person name="Angiuoli S.V."/>
            <person name="Oggioni M."/>
            <person name="Dunning Hotopp J.C."/>
            <person name="Hu F.Z."/>
            <person name="Riley D.R."/>
            <person name="Covacci A."/>
            <person name="Mitchell T.J."/>
            <person name="Bentley S.D."/>
            <person name="Kilian M."/>
            <person name="Ehrlich G.D."/>
            <person name="Rappuoli R."/>
            <person name="Moxon E.R."/>
            <person name="Masignani V."/>
        </authorList>
    </citation>
    <scope>NUCLEOTIDE SEQUENCE [LARGE SCALE GENOMIC DNA]</scope>
    <source>
        <strain>JJA</strain>
    </source>
</reference>
<keyword id="KW-0066">ATP synthesis</keyword>
<keyword id="KW-1003">Cell membrane</keyword>
<keyword id="KW-0139">CF(1)</keyword>
<keyword id="KW-0375">Hydrogen ion transport</keyword>
<keyword id="KW-0406">Ion transport</keyword>
<keyword id="KW-0472">Membrane</keyword>
<keyword id="KW-0813">Transport</keyword>
<protein>
    <recommendedName>
        <fullName evidence="1">ATP synthase epsilon chain</fullName>
    </recommendedName>
    <alternativeName>
        <fullName evidence="1">ATP synthase F1 sector epsilon subunit</fullName>
    </alternativeName>
    <alternativeName>
        <fullName evidence="1">F-ATPase epsilon subunit</fullName>
    </alternativeName>
</protein>